<reference key="1">
    <citation type="journal article" date="2009" name="PLoS Genet.">
        <title>The complete genome and proteome of Laribacter hongkongensis reveal potential mechanisms for adaptations to different temperatures and habitats.</title>
        <authorList>
            <person name="Woo P.C.Y."/>
            <person name="Lau S.K.P."/>
            <person name="Tse H."/>
            <person name="Teng J.L.L."/>
            <person name="Curreem S.O."/>
            <person name="Tsang A.K.L."/>
            <person name="Fan R.Y.Y."/>
            <person name="Wong G.K.M."/>
            <person name="Huang Y."/>
            <person name="Loman N.J."/>
            <person name="Snyder L.A.S."/>
            <person name="Cai J.J."/>
            <person name="Huang J.-D."/>
            <person name="Mak W."/>
            <person name="Pallen M.J."/>
            <person name="Lok S."/>
            <person name="Yuen K.-Y."/>
        </authorList>
    </citation>
    <scope>NUCLEOTIDE SEQUENCE [LARGE SCALE GENOMIC DNA]</scope>
    <source>
        <strain>HLHK9</strain>
    </source>
</reference>
<evidence type="ECO:0000255" key="1">
    <source>
        <dbReference type="HAMAP-Rule" id="MF_00127"/>
    </source>
</evidence>
<sequence>MAEKIQAIRGMNDILPAESHQWEYFEGVLRGLLADYGYQNIRTPIVESTPLFIRSIGEVTDIVEKEMYTFTDSLNGDSLTLRPEGTAGTLRAVVEHNLLYNTTQKLWYTGPMFRHERPQKGRYRQFHQIGIEALGFAGPDIDAEIILMTADLWKRLGISDFVQLEINTLGNKEERAAHREALIKYLEGHVDILDEDGKRRLYTNPLRVLDTKNPAMQDMANQAPRLIDYLGAESRAHYDGWKAMIEAVGIRYVENPRLVRGLDYYNQSVFEWVTTELGAQGTVCAGGRYDGLTEQIGGKPAPGIGFGMGMERVLLLLADKDLLPARKAADVYIVQQGEGAPVYAMQLAQDLRAAGLSVIQHLGEASFKSQMKKADQSGARWALVVGENEIRQQQVAVKPLRDGTEQQTVARTDIVSHLAGRMA</sequence>
<comment type="catalytic activity">
    <reaction evidence="1">
        <text>tRNA(His) + L-histidine + ATP = L-histidyl-tRNA(His) + AMP + diphosphate + H(+)</text>
        <dbReference type="Rhea" id="RHEA:17313"/>
        <dbReference type="Rhea" id="RHEA-COMP:9665"/>
        <dbReference type="Rhea" id="RHEA-COMP:9689"/>
        <dbReference type="ChEBI" id="CHEBI:15378"/>
        <dbReference type="ChEBI" id="CHEBI:30616"/>
        <dbReference type="ChEBI" id="CHEBI:33019"/>
        <dbReference type="ChEBI" id="CHEBI:57595"/>
        <dbReference type="ChEBI" id="CHEBI:78442"/>
        <dbReference type="ChEBI" id="CHEBI:78527"/>
        <dbReference type="ChEBI" id="CHEBI:456215"/>
        <dbReference type="EC" id="6.1.1.21"/>
    </reaction>
</comment>
<comment type="subunit">
    <text evidence="1">Homodimer.</text>
</comment>
<comment type="subcellular location">
    <subcellularLocation>
        <location evidence="1">Cytoplasm</location>
    </subcellularLocation>
</comment>
<comment type="similarity">
    <text evidence="1">Belongs to the class-II aminoacyl-tRNA synthetase family.</text>
</comment>
<proteinExistence type="inferred from homology"/>
<organism>
    <name type="scientific">Laribacter hongkongensis (strain HLHK9)</name>
    <dbReference type="NCBI Taxonomy" id="557598"/>
    <lineage>
        <taxon>Bacteria</taxon>
        <taxon>Pseudomonadati</taxon>
        <taxon>Pseudomonadota</taxon>
        <taxon>Betaproteobacteria</taxon>
        <taxon>Neisseriales</taxon>
        <taxon>Aquaspirillaceae</taxon>
        <taxon>Laribacter</taxon>
    </lineage>
</organism>
<gene>
    <name evidence="1" type="primary">hisS</name>
    <name type="ordered locus">LHK_00686</name>
</gene>
<protein>
    <recommendedName>
        <fullName evidence="1">Histidine--tRNA ligase</fullName>
        <ecNumber evidence="1">6.1.1.21</ecNumber>
    </recommendedName>
    <alternativeName>
        <fullName evidence="1">Histidyl-tRNA synthetase</fullName>
        <shortName evidence="1">HisRS</shortName>
    </alternativeName>
</protein>
<name>SYH_LARHH</name>
<dbReference type="EC" id="6.1.1.21" evidence="1"/>
<dbReference type="EMBL" id="CP001154">
    <property type="protein sequence ID" value="ACO73679.1"/>
    <property type="molecule type" value="Genomic_DNA"/>
</dbReference>
<dbReference type="RefSeq" id="WP_012696171.1">
    <property type="nucleotide sequence ID" value="NC_012559.1"/>
</dbReference>
<dbReference type="SMR" id="C1DD44"/>
<dbReference type="STRING" id="557598.LHK_00686"/>
<dbReference type="KEGG" id="lhk:LHK_00686"/>
<dbReference type="eggNOG" id="COG0124">
    <property type="taxonomic scope" value="Bacteria"/>
</dbReference>
<dbReference type="HOGENOM" id="CLU_025113_1_1_4"/>
<dbReference type="Proteomes" id="UP000002010">
    <property type="component" value="Chromosome"/>
</dbReference>
<dbReference type="GO" id="GO:0005737">
    <property type="term" value="C:cytoplasm"/>
    <property type="evidence" value="ECO:0007669"/>
    <property type="project" value="UniProtKB-SubCell"/>
</dbReference>
<dbReference type="GO" id="GO:0005524">
    <property type="term" value="F:ATP binding"/>
    <property type="evidence" value="ECO:0007669"/>
    <property type="project" value="UniProtKB-UniRule"/>
</dbReference>
<dbReference type="GO" id="GO:0004821">
    <property type="term" value="F:histidine-tRNA ligase activity"/>
    <property type="evidence" value="ECO:0007669"/>
    <property type="project" value="UniProtKB-UniRule"/>
</dbReference>
<dbReference type="GO" id="GO:0006427">
    <property type="term" value="P:histidyl-tRNA aminoacylation"/>
    <property type="evidence" value="ECO:0007669"/>
    <property type="project" value="UniProtKB-UniRule"/>
</dbReference>
<dbReference type="CDD" id="cd00773">
    <property type="entry name" value="HisRS-like_core"/>
    <property type="match status" value="1"/>
</dbReference>
<dbReference type="CDD" id="cd00859">
    <property type="entry name" value="HisRS_anticodon"/>
    <property type="match status" value="1"/>
</dbReference>
<dbReference type="FunFam" id="3.30.930.10:FF:000005">
    <property type="entry name" value="Histidine--tRNA ligase"/>
    <property type="match status" value="1"/>
</dbReference>
<dbReference type="Gene3D" id="3.40.50.800">
    <property type="entry name" value="Anticodon-binding domain"/>
    <property type="match status" value="1"/>
</dbReference>
<dbReference type="Gene3D" id="3.30.930.10">
    <property type="entry name" value="Bira Bifunctional Protein, Domain 2"/>
    <property type="match status" value="1"/>
</dbReference>
<dbReference type="HAMAP" id="MF_00127">
    <property type="entry name" value="His_tRNA_synth"/>
    <property type="match status" value="1"/>
</dbReference>
<dbReference type="InterPro" id="IPR006195">
    <property type="entry name" value="aa-tRNA-synth_II"/>
</dbReference>
<dbReference type="InterPro" id="IPR045864">
    <property type="entry name" value="aa-tRNA-synth_II/BPL/LPL"/>
</dbReference>
<dbReference type="InterPro" id="IPR004154">
    <property type="entry name" value="Anticodon-bd"/>
</dbReference>
<dbReference type="InterPro" id="IPR036621">
    <property type="entry name" value="Anticodon-bd_dom_sf"/>
</dbReference>
<dbReference type="InterPro" id="IPR015807">
    <property type="entry name" value="His-tRNA-ligase"/>
</dbReference>
<dbReference type="InterPro" id="IPR041715">
    <property type="entry name" value="HisRS-like_core"/>
</dbReference>
<dbReference type="InterPro" id="IPR004516">
    <property type="entry name" value="HisRS/HisZ"/>
</dbReference>
<dbReference type="InterPro" id="IPR033656">
    <property type="entry name" value="HisRS_anticodon"/>
</dbReference>
<dbReference type="NCBIfam" id="TIGR00442">
    <property type="entry name" value="hisS"/>
    <property type="match status" value="1"/>
</dbReference>
<dbReference type="PANTHER" id="PTHR43707:SF1">
    <property type="entry name" value="HISTIDINE--TRNA LIGASE, MITOCHONDRIAL-RELATED"/>
    <property type="match status" value="1"/>
</dbReference>
<dbReference type="PANTHER" id="PTHR43707">
    <property type="entry name" value="HISTIDYL-TRNA SYNTHETASE"/>
    <property type="match status" value="1"/>
</dbReference>
<dbReference type="Pfam" id="PF03129">
    <property type="entry name" value="HGTP_anticodon"/>
    <property type="match status" value="1"/>
</dbReference>
<dbReference type="Pfam" id="PF13393">
    <property type="entry name" value="tRNA-synt_His"/>
    <property type="match status" value="1"/>
</dbReference>
<dbReference type="PIRSF" id="PIRSF001549">
    <property type="entry name" value="His-tRNA_synth"/>
    <property type="match status" value="1"/>
</dbReference>
<dbReference type="SUPFAM" id="SSF52954">
    <property type="entry name" value="Class II aaRS ABD-related"/>
    <property type="match status" value="1"/>
</dbReference>
<dbReference type="SUPFAM" id="SSF55681">
    <property type="entry name" value="Class II aaRS and biotin synthetases"/>
    <property type="match status" value="1"/>
</dbReference>
<dbReference type="PROSITE" id="PS50862">
    <property type="entry name" value="AA_TRNA_LIGASE_II"/>
    <property type="match status" value="1"/>
</dbReference>
<feature type="chain" id="PRO_1000199139" description="Histidine--tRNA ligase">
    <location>
        <begin position="1"/>
        <end position="423"/>
    </location>
</feature>
<keyword id="KW-0030">Aminoacyl-tRNA synthetase</keyword>
<keyword id="KW-0067">ATP-binding</keyword>
<keyword id="KW-0963">Cytoplasm</keyword>
<keyword id="KW-0436">Ligase</keyword>
<keyword id="KW-0547">Nucleotide-binding</keyword>
<keyword id="KW-0648">Protein biosynthesis</keyword>
<keyword id="KW-1185">Reference proteome</keyword>
<accession>C1DD44</accession>